<keyword id="KW-0903">Direct protein sequencing</keyword>
<keyword id="KW-1015">Disulfide bond</keyword>
<keyword id="KW-0255">Endonuclease</keyword>
<keyword id="KW-0325">Glycoprotein</keyword>
<keyword id="KW-0378">Hydrolase</keyword>
<keyword id="KW-0540">Nuclease</keyword>
<keyword id="KW-1185">Reference proteome</keyword>
<keyword id="KW-0964">Secreted</keyword>
<keyword id="KW-0732">Signal</keyword>
<reference key="1">
    <citation type="journal article" date="1991" name="Nucleic Acids Res.">
        <title>Molecular cloning of the gene encoding the bovine brain ribonuclease and its expression in different regions of the brain.</title>
        <authorList>
            <person name="Sasso M.P."/>
            <person name="Carsana A."/>
            <person name="Confalone E."/>
            <person name="Cosi C."/>
            <person name="Sorrentino S."/>
            <person name="Viola M."/>
            <person name="Palmieri M."/>
            <person name="Russo E."/>
            <person name="Furia A."/>
        </authorList>
    </citation>
    <scope>NUCLEOTIDE SEQUENCE [GENOMIC DNA]</scope>
</reference>
<reference key="2">
    <citation type="submission" date="2006-04" db="EMBL/GenBank/DDBJ databases">
        <authorList>
            <consortium name="NIH - Mammalian Gene Collection (MGC) project"/>
        </authorList>
    </citation>
    <scope>NUCLEOTIDE SEQUENCE [LARGE SCALE MRNA]</scope>
    <source>
        <strain>Hereford</strain>
        <tissue>Hypothalamus</tissue>
    </source>
</reference>
<reference key="3">
    <citation type="journal article" date="1988" name="J. Biochem.">
        <title>Primary structure of a ribonuclease from bovine brain.</title>
        <authorList>
            <person name="Watanabe H."/>
            <person name="Katoh H."/>
            <person name="Ishii M."/>
            <person name="Komoda Y."/>
            <person name="Sanda A."/>
            <person name="Takizawa Y."/>
            <person name="Ohgi K."/>
            <person name="Irie M."/>
        </authorList>
    </citation>
    <scope>PROTEIN SEQUENCE OF 27-167</scope>
    <scope>GLYCOSYLATION AT ASN-88; THR-155 AND SER-159</scope>
    <source>
        <tissue>Brain</tissue>
    </source>
</reference>
<reference key="4">
    <citation type="journal article" date="1995" name="J. Mol. Evol.">
        <title>Molecular evolution of genes encoding ribonucleases in ruminant species.</title>
        <authorList>
            <person name="Confalone E."/>
            <person name="Beintema J.J."/>
            <person name="Sasso M.P."/>
            <person name="Carsana A."/>
            <person name="Palmieri M."/>
            <person name="Vento M.T."/>
            <person name="Furia A."/>
        </authorList>
    </citation>
    <scope>NUCLEOTIDE SEQUENCE [GENOMIC DNA] OF 27-167</scope>
</reference>
<protein>
    <recommendedName>
        <fullName>Brain ribonuclease</fullName>
        <shortName>BRB</shortName>
        <ecNumber>3.1.27.-</ecNumber>
    </recommendedName>
</protein>
<gene>
    <name type="primary">BRN</name>
</gene>
<organism>
    <name type="scientific">Bos taurus</name>
    <name type="common">Bovine</name>
    <dbReference type="NCBI Taxonomy" id="9913"/>
    <lineage>
        <taxon>Eukaryota</taxon>
        <taxon>Metazoa</taxon>
        <taxon>Chordata</taxon>
        <taxon>Craniata</taxon>
        <taxon>Vertebrata</taxon>
        <taxon>Euteleostomi</taxon>
        <taxon>Mammalia</taxon>
        <taxon>Eutheria</taxon>
        <taxon>Laurasiatheria</taxon>
        <taxon>Artiodactyla</taxon>
        <taxon>Ruminantia</taxon>
        <taxon>Pecora</taxon>
        <taxon>Bovidae</taxon>
        <taxon>Bovinae</taxon>
        <taxon>Bos</taxon>
    </lineage>
</organism>
<accession>P39873</accession>
<accession>Q1RMP6</accession>
<proteinExistence type="evidence at protein level"/>
<name>RNBR_BOVIN</name>
<sequence length="167" mass="18450">MALKSLVLLSLLVLVLLLVQVQPSLGKESAAAKFRRQHMDSGSSSSSNPNYCNQMMKRRRMTHGRCKPVNTFVHESLDDVKAVCSQKNITCKNGHPNCYQSKSTMSITDCRETGSSKYPNCAYKTSQKQKYITVACEGNPYVPVHFDGAVLLPATPVPSLPPPHRLL</sequence>
<dbReference type="EC" id="3.1.27.-"/>
<dbReference type="EMBL" id="X59767">
    <property type="protein sequence ID" value="CAA42439.1"/>
    <property type="molecule type" value="Genomic_DNA"/>
</dbReference>
<dbReference type="EMBL" id="BC114791">
    <property type="protein sequence ID" value="AAI14792.1"/>
    <property type="molecule type" value="mRNA"/>
</dbReference>
<dbReference type="EMBL" id="S81744">
    <property type="protein sequence ID" value="AAB36138.1"/>
    <property type="molecule type" value="Genomic_DNA"/>
</dbReference>
<dbReference type="PIR" id="S20066">
    <property type="entry name" value="S20066"/>
</dbReference>
<dbReference type="RefSeq" id="NP_776316.1">
    <property type="nucleotide sequence ID" value="NM_173891.2"/>
</dbReference>
<dbReference type="SMR" id="P39873"/>
<dbReference type="FunCoup" id="P39873">
    <property type="interactions" value="11"/>
</dbReference>
<dbReference type="STRING" id="9913.ENSBTAP00000006510"/>
<dbReference type="GlyConnect" id="528">
    <property type="glycosylation" value="19 N-Linked glycans (1 site)"/>
</dbReference>
<dbReference type="GlyCosmos" id="P39873">
    <property type="glycosylation" value="3 sites, 31 glycans"/>
</dbReference>
<dbReference type="GlyGen" id="P39873">
    <property type="glycosylation" value="3 sites, 31 N-linked glycans (1 site)"/>
</dbReference>
<dbReference type="iPTMnet" id="P39873"/>
<dbReference type="PaxDb" id="9913-ENSBTAP00000006510"/>
<dbReference type="Ensembl" id="ENSBTAT00000006510.5">
    <property type="protein sequence ID" value="ENSBTAP00000006510.3"/>
    <property type="gene ID" value="ENSBTAG00000004950.5"/>
</dbReference>
<dbReference type="GeneID" id="280720"/>
<dbReference type="KEGG" id="bta:280720"/>
<dbReference type="CTD" id="247925"/>
<dbReference type="VEuPathDB" id="HostDB:ENSBTAG00000004950"/>
<dbReference type="eggNOG" id="ENOG502SQ4K">
    <property type="taxonomic scope" value="Eukaryota"/>
</dbReference>
<dbReference type="GeneTree" id="ENSGT00940000160869"/>
<dbReference type="HOGENOM" id="CLU_117006_0_0_1"/>
<dbReference type="InParanoid" id="P39873"/>
<dbReference type="OMA" id="CVQPSLG"/>
<dbReference type="OrthoDB" id="8573660at2759"/>
<dbReference type="TreeFam" id="TF333393"/>
<dbReference type="Proteomes" id="UP000009136">
    <property type="component" value="Chromosome 10"/>
</dbReference>
<dbReference type="Bgee" id="ENSBTAG00000004950">
    <property type="expression patterns" value="Expressed in omental fat pad and 106 other cell types or tissues"/>
</dbReference>
<dbReference type="GO" id="GO:0005576">
    <property type="term" value="C:extracellular region"/>
    <property type="evidence" value="ECO:0007669"/>
    <property type="project" value="UniProtKB-SubCell"/>
</dbReference>
<dbReference type="GO" id="GO:0004519">
    <property type="term" value="F:endonuclease activity"/>
    <property type="evidence" value="ECO:0007669"/>
    <property type="project" value="UniProtKB-KW"/>
</dbReference>
<dbReference type="GO" id="GO:0003676">
    <property type="term" value="F:nucleic acid binding"/>
    <property type="evidence" value="ECO:0007669"/>
    <property type="project" value="InterPro"/>
</dbReference>
<dbReference type="GO" id="GO:0004540">
    <property type="term" value="F:RNA nuclease activity"/>
    <property type="evidence" value="ECO:0000318"/>
    <property type="project" value="GO_Central"/>
</dbReference>
<dbReference type="GO" id="GO:0050830">
    <property type="term" value="P:defense response to Gram-positive bacterium"/>
    <property type="evidence" value="ECO:0000318"/>
    <property type="project" value="GO_Central"/>
</dbReference>
<dbReference type="CDD" id="cd06265">
    <property type="entry name" value="RNase_A_canonical"/>
    <property type="match status" value="1"/>
</dbReference>
<dbReference type="FunFam" id="3.10.130.10:FF:000001">
    <property type="entry name" value="Ribonuclease pancreatic"/>
    <property type="match status" value="1"/>
</dbReference>
<dbReference type="Gene3D" id="3.10.130.10">
    <property type="entry name" value="Ribonuclease A-like domain"/>
    <property type="match status" value="1"/>
</dbReference>
<dbReference type="InterPro" id="IPR001427">
    <property type="entry name" value="RNaseA"/>
</dbReference>
<dbReference type="InterPro" id="IPR036816">
    <property type="entry name" value="RNaseA-like_dom_sf"/>
</dbReference>
<dbReference type="InterPro" id="IPR023411">
    <property type="entry name" value="RNaseA_AS"/>
</dbReference>
<dbReference type="InterPro" id="IPR023412">
    <property type="entry name" value="RNaseA_domain"/>
</dbReference>
<dbReference type="PANTHER" id="PTHR11437">
    <property type="entry name" value="RIBONUCLEASE"/>
    <property type="match status" value="1"/>
</dbReference>
<dbReference type="PANTHER" id="PTHR11437:SF24">
    <property type="entry name" value="RIBONUCLEASE PANCREATIC"/>
    <property type="match status" value="1"/>
</dbReference>
<dbReference type="Pfam" id="PF00074">
    <property type="entry name" value="RnaseA"/>
    <property type="match status" value="1"/>
</dbReference>
<dbReference type="PRINTS" id="PR00794">
    <property type="entry name" value="RIBONUCLEASE"/>
</dbReference>
<dbReference type="SMART" id="SM00092">
    <property type="entry name" value="RNAse_Pc"/>
    <property type="match status" value="1"/>
</dbReference>
<dbReference type="SUPFAM" id="SSF54076">
    <property type="entry name" value="RNase A-like"/>
    <property type="match status" value="1"/>
</dbReference>
<dbReference type="PROSITE" id="PS00127">
    <property type="entry name" value="RNASE_PANCREATIC"/>
    <property type="match status" value="1"/>
</dbReference>
<evidence type="ECO:0000250" key="1"/>
<evidence type="ECO:0000269" key="2">
    <source>
    </source>
</evidence>
<evidence type="ECO:0000305" key="3"/>
<comment type="subcellular location">
    <subcellularLocation>
        <location>Secreted</location>
    </subcellularLocation>
</comment>
<comment type="similarity">
    <text evidence="3">Belongs to the pancreatic ribonuclease family.</text>
</comment>
<feature type="signal peptide" evidence="2">
    <location>
        <begin position="1"/>
        <end position="26"/>
    </location>
</feature>
<feature type="chain" id="PRO_0000030909" description="Brain ribonuclease">
    <location>
        <begin position="27"/>
        <end position="167"/>
    </location>
</feature>
<feature type="active site" description="Proton acceptor" evidence="1">
    <location>
        <position position="38"/>
    </location>
</feature>
<feature type="active site" description="Proton donor" evidence="1">
    <location>
        <position position="145"/>
    </location>
</feature>
<feature type="binding site" evidence="1">
    <location>
        <position position="33"/>
    </location>
    <ligand>
        <name>substrate</name>
    </ligand>
</feature>
<feature type="binding site" evidence="1">
    <location>
        <position position="36"/>
    </location>
    <ligand>
        <name>substrate</name>
    </ligand>
</feature>
<feature type="binding site" evidence="1">
    <location>
        <begin position="67"/>
        <end position="71"/>
    </location>
    <ligand>
        <name>substrate</name>
    </ligand>
</feature>
<feature type="binding site" evidence="1">
    <location>
        <position position="92"/>
    </location>
    <ligand>
        <name>substrate</name>
    </ligand>
</feature>
<feature type="binding site" evidence="1">
    <location>
        <position position="111"/>
    </location>
    <ligand>
        <name>substrate</name>
    </ligand>
</feature>
<feature type="glycosylation site" id="CAR_000005" description="N-linked (GlcNAc...) asparagine" evidence="2">
    <location>
        <position position="88"/>
    </location>
</feature>
<feature type="glycosylation site" description="O-linked (GalNAc...) threonine" evidence="2">
    <location>
        <position position="155"/>
    </location>
</feature>
<feature type="glycosylation site" description="O-linked (GalNAc...) serine" evidence="2">
    <location>
        <position position="159"/>
    </location>
</feature>
<feature type="disulfide bond" evidence="1">
    <location>
        <begin position="52"/>
        <end position="110"/>
    </location>
</feature>
<feature type="disulfide bond" evidence="1">
    <location>
        <begin position="66"/>
        <end position="121"/>
    </location>
</feature>
<feature type="disulfide bond" evidence="1">
    <location>
        <begin position="84"/>
        <end position="136"/>
    </location>
</feature>
<feature type="disulfide bond" evidence="1">
    <location>
        <begin position="91"/>
        <end position="98"/>
    </location>
</feature>
<feature type="sequence conflict" description="In Ref. 3; AA sequence." evidence="3" ref="3">
    <original>T</original>
    <variation>S</variation>
    <location>
        <position position="155"/>
    </location>
</feature>